<keyword id="KW-1185">Reference proteome</keyword>
<keyword id="KW-0687">Ribonucleoprotein</keyword>
<keyword id="KW-0689">Ribosomal protein</keyword>
<keyword id="KW-0694">RNA-binding</keyword>
<keyword id="KW-0699">rRNA-binding</keyword>
<dbReference type="EMBL" id="CP000930">
    <property type="protein sequence ID" value="ABZ83593.1"/>
    <property type="molecule type" value="Genomic_DNA"/>
</dbReference>
<dbReference type="RefSeq" id="WP_012282121.1">
    <property type="nucleotide sequence ID" value="NC_010337.2"/>
</dbReference>
<dbReference type="SMR" id="B0TA56"/>
<dbReference type="STRING" id="498761.HM1_0973"/>
<dbReference type="KEGG" id="hmo:HM1_0973"/>
<dbReference type="eggNOG" id="COG0359">
    <property type="taxonomic scope" value="Bacteria"/>
</dbReference>
<dbReference type="HOGENOM" id="CLU_078938_3_0_9"/>
<dbReference type="OrthoDB" id="9788336at2"/>
<dbReference type="Proteomes" id="UP000008550">
    <property type="component" value="Chromosome"/>
</dbReference>
<dbReference type="GO" id="GO:1990904">
    <property type="term" value="C:ribonucleoprotein complex"/>
    <property type="evidence" value="ECO:0007669"/>
    <property type="project" value="UniProtKB-KW"/>
</dbReference>
<dbReference type="GO" id="GO:0005840">
    <property type="term" value="C:ribosome"/>
    <property type="evidence" value="ECO:0007669"/>
    <property type="project" value="UniProtKB-KW"/>
</dbReference>
<dbReference type="GO" id="GO:0019843">
    <property type="term" value="F:rRNA binding"/>
    <property type="evidence" value="ECO:0007669"/>
    <property type="project" value="UniProtKB-UniRule"/>
</dbReference>
<dbReference type="GO" id="GO:0003735">
    <property type="term" value="F:structural constituent of ribosome"/>
    <property type="evidence" value="ECO:0007669"/>
    <property type="project" value="InterPro"/>
</dbReference>
<dbReference type="GO" id="GO:0006412">
    <property type="term" value="P:translation"/>
    <property type="evidence" value="ECO:0007669"/>
    <property type="project" value="UniProtKB-UniRule"/>
</dbReference>
<dbReference type="FunFam" id="3.40.5.10:FF:000003">
    <property type="entry name" value="50S ribosomal protein L9"/>
    <property type="match status" value="1"/>
</dbReference>
<dbReference type="Gene3D" id="3.10.430.100">
    <property type="entry name" value="Ribosomal protein L9, C-terminal domain"/>
    <property type="match status" value="1"/>
</dbReference>
<dbReference type="Gene3D" id="3.40.5.10">
    <property type="entry name" value="Ribosomal protein L9, N-terminal domain"/>
    <property type="match status" value="1"/>
</dbReference>
<dbReference type="HAMAP" id="MF_00503">
    <property type="entry name" value="Ribosomal_bL9"/>
    <property type="match status" value="1"/>
</dbReference>
<dbReference type="InterPro" id="IPR000244">
    <property type="entry name" value="Ribosomal_bL9"/>
</dbReference>
<dbReference type="InterPro" id="IPR009027">
    <property type="entry name" value="Ribosomal_bL9/RNase_H1_N"/>
</dbReference>
<dbReference type="InterPro" id="IPR020594">
    <property type="entry name" value="Ribosomal_bL9_bac/chp"/>
</dbReference>
<dbReference type="InterPro" id="IPR020069">
    <property type="entry name" value="Ribosomal_bL9_C"/>
</dbReference>
<dbReference type="InterPro" id="IPR036791">
    <property type="entry name" value="Ribosomal_bL9_C_sf"/>
</dbReference>
<dbReference type="InterPro" id="IPR020070">
    <property type="entry name" value="Ribosomal_bL9_N"/>
</dbReference>
<dbReference type="InterPro" id="IPR036935">
    <property type="entry name" value="Ribosomal_bL9_N_sf"/>
</dbReference>
<dbReference type="NCBIfam" id="TIGR00158">
    <property type="entry name" value="L9"/>
    <property type="match status" value="1"/>
</dbReference>
<dbReference type="PANTHER" id="PTHR21368">
    <property type="entry name" value="50S RIBOSOMAL PROTEIN L9"/>
    <property type="match status" value="1"/>
</dbReference>
<dbReference type="Pfam" id="PF03948">
    <property type="entry name" value="Ribosomal_L9_C"/>
    <property type="match status" value="1"/>
</dbReference>
<dbReference type="Pfam" id="PF01281">
    <property type="entry name" value="Ribosomal_L9_N"/>
    <property type="match status" value="1"/>
</dbReference>
<dbReference type="SUPFAM" id="SSF55658">
    <property type="entry name" value="L9 N-domain-like"/>
    <property type="match status" value="1"/>
</dbReference>
<dbReference type="SUPFAM" id="SSF55653">
    <property type="entry name" value="Ribosomal protein L9 C-domain"/>
    <property type="match status" value="1"/>
</dbReference>
<evidence type="ECO:0000255" key="1">
    <source>
        <dbReference type="HAMAP-Rule" id="MF_00503"/>
    </source>
</evidence>
<evidence type="ECO:0000305" key="2"/>
<protein>
    <recommendedName>
        <fullName evidence="1">Large ribosomal subunit protein bL9</fullName>
    </recommendedName>
    <alternativeName>
        <fullName evidence="2">50S ribosomal protein L9</fullName>
    </alternativeName>
</protein>
<gene>
    <name evidence="1" type="primary">rplI</name>
    <name type="ordered locus">Helmi_09680</name>
    <name type="ORF">HM1_0973</name>
</gene>
<organism>
    <name type="scientific">Heliobacterium modesticaldum (strain ATCC 51547 / Ice1)</name>
    <dbReference type="NCBI Taxonomy" id="498761"/>
    <lineage>
        <taxon>Bacteria</taxon>
        <taxon>Bacillati</taxon>
        <taxon>Bacillota</taxon>
        <taxon>Clostridia</taxon>
        <taxon>Eubacteriales</taxon>
        <taxon>Heliobacteriaceae</taxon>
        <taxon>Heliomicrobium</taxon>
    </lineage>
</organism>
<reference key="1">
    <citation type="journal article" date="2008" name="J. Bacteriol.">
        <title>The genome of Heliobacterium modesticaldum, a phototrophic representative of the Firmicutes containing the simplest photosynthetic apparatus.</title>
        <authorList>
            <person name="Sattley W.M."/>
            <person name="Madigan M.T."/>
            <person name="Swingley W.D."/>
            <person name="Cheung P.C."/>
            <person name="Clocksin K.M."/>
            <person name="Conrad A.L."/>
            <person name="Dejesa L.C."/>
            <person name="Honchak B.M."/>
            <person name="Jung D.O."/>
            <person name="Karbach L.E."/>
            <person name="Kurdoglu A."/>
            <person name="Lahiri S."/>
            <person name="Mastrian S.D."/>
            <person name="Page L.E."/>
            <person name="Taylor H.L."/>
            <person name="Wang Z.T."/>
            <person name="Raymond J."/>
            <person name="Chen M."/>
            <person name="Blankenship R.E."/>
            <person name="Touchman J.W."/>
        </authorList>
    </citation>
    <scope>NUCLEOTIDE SEQUENCE [LARGE SCALE GENOMIC DNA]</scope>
    <source>
        <strain>ATCC 51547 / Ice1</strain>
    </source>
</reference>
<proteinExistence type="inferred from homology"/>
<feature type="chain" id="PRO_1000126921" description="Large ribosomal subunit protein bL9">
    <location>
        <begin position="1"/>
        <end position="148"/>
    </location>
</feature>
<comment type="function">
    <text evidence="1">Binds to the 23S rRNA.</text>
</comment>
<comment type="similarity">
    <text evidence="1">Belongs to the bacterial ribosomal protein bL9 family.</text>
</comment>
<sequence length="148" mass="16306">MKVILQQDVKNLGKKGDIVDIAEGYGRNYVLPRGLAIEATPANLKNLERLKANEAKKKEQELMDAKELGAKLSGITVKVRSKAGEGGRLFGAVTNKEIAETVEKQFGLKVDKRKYELKQPIKTLGHYPITVKIHPAVSAELKVEVVSE</sequence>
<accession>B0TA56</accession>
<name>RL9_HELMI</name>